<comment type="function">
    <text evidence="1">Catalyzes the attachment of isoleucine to tRNA(Ile). As IleRS can inadvertently accommodate and process structurally similar amino acids such as valine, to avoid such errors it has two additional distinct tRNA(Ile)-dependent editing activities. One activity is designated as 'pretransfer' editing and involves the hydrolysis of activated Val-AMP. The other activity is designated 'posttransfer' editing and involves deacylation of mischarged Val-tRNA(Ile).</text>
</comment>
<comment type="catalytic activity">
    <reaction evidence="1">
        <text>tRNA(Ile) + L-isoleucine + ATP = L-isoleucyl-tRNA(Ile) + AMP + diphosphate</text>
        <dbReference type="Rhea" id="RHEA:11060"/>
        <dbReference type="Rhea" id="RHEA-COMP:9666"/>
        <dbReference type="Rhea" id="RHEA-COMP:9695"/>
        <dbReference type="ChEBI" id="CHEBI:30616"/>
        <dbReference type="ChEBI" id="CHEBI:33019"/>
        <dbReference type="ChEBI" id="CHEBI:58045"/>
        <dbReference type="ChEBI" id="CHEBI:78442"/>
        <dbReference type="ChEBI" id="CHEBI:78528"/>
        <dbReference type="ChEBI" id="CHEBI:456215"/>
        <dbReference type="EC" id="6.1.1.5"/>
    </reaction>
</comment>
<comment type="cofactor">
    <cofactor evidence="1">
        <name>Zn(2+)</name>
        <dbReference type="ChEBI" id="CHEBI:29105"/>
    </cofactor>
    <text evidence="1">Binds 1 zinc ion per subunit.</text>
</comment>
<comment type="subunit">
    <text evidence="1">Monomer.</text>
</comment>
<comment type="subcellular location">
    <subcellularLocation>
        <location evidence="1">Cytoplasm</location>
    </subcellularLocation>
</comment>
<comment type="domain">
    <text evidence="1">IleRS has two distinct active sites: one for aminoacylation and one for editing. The misactivated valine is translocated from the active site to the editing site, which sterically excludes the correctly activated isoleucine. The single editing site contains two valyl binding pockets, one specific for each substrate (Val-AMP or Val-tRNA(Ile)).</text>
</comment>
<comment type="similarity">
    <text evidence="1">Belongs to the class-I aminoacyl-tRNA synthetase family. IleS type 1 subfamily.</text>
</comment>
<evidence type="ECO:0000255" key="1">
    <source>
        <dbReference type="HAMAP-Rule" id="MF_02002"/>
    </source>
</evidence>
<proteinExistence type="inferred from homology"/>
<sequence length="920" mass="105969">MKEYKDTLNLNETTFSMKGNLSVNEPKTYAKWQEQQAFKRMQNRKDNHGDFTLHDGPPYANGHLHLGHALNKILKDIVIKREYFKGKKIYYTPGWDCHGLPIEQQILEQLEKEKTSLENPTLFREKCRDHAKKFLEIQKNEFLQLGVLGDFEDPYKTMDFKFEASIYRALVGVAKKGLLKERHKPIYWSYACESALAEAEVEYKMKKSPSIFVAFDLKKEGLEKLKVKKASLVIWTTTPWTLYANVAIALKKDAVYALTQKGYLVAKALHEKLAALGVVDNAITHEFNSNDLEYLVATNPLNQRDSLVVLGDHVSLEDGTGAVHTAPGHGEEDYYLGLKYHLEVLMSVDEKGCYDEGIIHNQLLDKSYLGEHIFKAQKRIIEQLGDSLLLEREIEHSYPHCWRTHKPVIYRATTQWFILMDEPFIQNDGSQKTLREVALDAIEKVEFVPSSGKNRLKTMIENRPDWCLSRQRKWGVPLAFFIDKRTNKPCFESEVLEHVANLFEEKGCDVWWEYNIKDLLPPSYQDNAKHYEKVMHILDVWFDSGSTFKAVLEDYHGEKGQSPSDVVLEGSDQHRGWFQSSLLIGCVLNNQAPFKKVITHGFIVDEKGEKMSKSKGNVVSLDNLLKKHGSDVVRLWVAFNDYQNDLRVSQTFFIQTEQHYKKFRNTLKFLLANFSDMDLKNLERPHDFSPLDHFILEALETISAGVNSAFEEHDLVKGLNILMAFVTNELSGIYLDACKDSLYCDSKNNEKRQAIQMVLLAVASQLCYFLAPILTHTIEEVLEHSQVLRAFLQAKDVFDLKGISVLEKLHLKEFKKPENFEAVLALRSAFNEELDRLKKEGVVKNSLECAIEVKEKALCENLVEELLMVSFVGVAKEKLSETPAFTLFKAPFYKCPRCWRFKSELENTPCKRCEEVLKER</sequence>
<reference key="1">
    <citation type="journal article" date="1999" name="Nature">
        <title>Genomic sequence comparison of two unrelated isolates of the human gastric pathogen Helicobacter pylori.</title>
        <authorList>
            <person name="Alm R.A."/>
            <person name="Ling L.-S.L."/>
            <person name="Moir D.T."/>
            <person name="King B.L."/>
            <person name="Brown E.D."/>
            <person name="Doig P.C."/>
            <person name="Smith D.R."/>
            <person name="Noonan B."/>
            <person name="Guild B.C."/>
            <person name="deJonge B.L."/>
            <person name="Carmel G."/>
            <person name="Tummino P.J."/>
            <person name="Caruso A."/>
            <person name="Uria-Nickelsen M."/>
            <person name="Mills D.M."/>
            <person name="Ives C."/>
            <person name="Gibson R."/>
            <person name="Merberg D."/>
            <person name="Mills S.D."/>
            <person name="Jiang Q."/>
            <person name="Taylor D.E."/>
            <person name="Vovis G.F."/>
            <person name="Trust T.J."/>
        </authorList>
    </citation>
    <scope>NUCLEOTIDE SEQUENCE [LARGE SCALE GENOMIC DNA]</scope>
    <source>
        <strain>J99 / ATCC 700824</strain>
    </source>
</reference>
<protein>
    <recommendedName>
        <fullName evidence="1">Isoleucine--tRNA ligase</fullName>
        <ecNumber evidence="1">6.1.1.5</ecNumber>
    </recommendedName>
    <alternativeName>
        <fullName evidence="1">Isoleucyl-tRNA synthetase</fullName>
        <shortName evidence="1">IleRS</shortName>
    </alternativeName>
</protein>
<keyword id="KW-0030">Aminoacyl-tRNA synthetase</keyword>
<keyword id="KW-0067">ATP-binding</keyword>
<keyword id="KW-0963">Cytoplasm</keyword>
<keyword id="KW-0436">Ligase</keyword>
<keyword id="KW-0479">Metal-binding</keyword>
<keyword id="KW-0547">Nucleotide-binding</keyword>
<keyword id="KW-0648">Protein biosynthesis</keyword>
<keyword id="KW-0862">Zinc</keyword>
<gene>
    <name evidence="1" type="primary">ileS</name>
    <name type="ordered locus">jhp_1317</name>
</gene>
<dbReference type="EC" id="6.1.1.5" evidence="1"/>
<dbReference type="EMBL" id="AE001439">
    <property type="protein sequence ID" value="AAD06890.1"/>
    <property type="molecule type" value="Genomic_DNA"/>
</dbReference>
<dbReference type="PIR" id="F71823">
    <property type="entry name" value="F71823"/>
</dbReference>
<dbReference type="RefSeq" id="WP_000666227.1">
    <property type="nucleotide sequence ID" value="NC_000921.1"/>
</dbReference>
<dbReference type="SMR" id="Q9ZJJ1"/>
<dbReference type="KEGG" id="hpj:jhp_1317"/>
<dbReference type="PATRIC" id="fig|85963.30.peg.1245"/>
<dbReference type="eggNOG" id="COG0060">
    <property type="taxonomic scope" value="Bacteria"/>
</dbReference>
<dbReference type="Proteomes" id="UP000000804">
    <property type="component" value="Chromosome"/>
</dbReference>
<dbReference type="GO" id="GO:0005829">
    <property type="term" value="C:cytosol"/>
    <property type="evidence" value="ECO:0007669"/>
    <property type="project" value="TreeGrafter"/>
</dbReference>
<dbReference type="GO" id="GO:0002161">
    <property type="term" value="F:aminoacyl-tRNA deacylase activity"/>
    <property type="evidence" value="ECO:0007669"/>
    <property type="project" value="InterPro"/>
</dbReference>
<dbReference type="GO" id="GO:0005524">
    <property type="term" value="F:ATP binding"/>
    <property type="evidence" value="ECO:0007669"/>
    <property type="project" value="UniProtKB-UniRule"/>
</dbReference>
<dbReference type="GO" id="GO:0004822">
    <property type="term" value="F:isoleucine-tRNA ligase activity"/>
    <property type="evidence" value="ECO:0007669"/>
    <property type="project" value="UniProtKB-UniRule"/>
</dbReference>
<dbReference type="GO" id="GO:0000049">
    <property type="term" value="F:tRNA binding"/>
    <property type="evidence" value="ECO:0007669"/>
    <property type="project" value="InterPro"/>
</dbReference>
<dbReference type="GO" id="GO:0008270">
    <property type="term" value="F:zinc ion binding"/>
    <property type="evidence" value="ECO:0007669"/>
    <property type="project" value="UniProtKB-UniRule"/>
</dbReference>
<dbReference type="GO" id="GO:0006428">
    <property type="term" value="P:isoleucyl-tRNA aminoacylation"/>
    <property type="evidence" value="ECO:0007669"/>
    <property type="project" value="UniProtKB-UniRule"/>
</dbReference>
<dbReference type="CDD" id="cd07960">
    <property type="entry name" value="Anticodon_Ia_Ile_BEm"/>
    <property type="match status" value="1"/>
</dbReference>
<dbReference type="CDD" id="cd00818">
    <property type="entry name" value="IleRS_core"/>
    <property type="match status" value="1"/>
</dbReference>
<dbReference type="FunFam" id="1.10.730.20:FF:000007">
    <property type="entry name" value="Isoleucine--tRNA ligase"/>
    <property type="match status" value="1"/>
</dbReference>
<dbReference type="FunFam" id="3.40.50.620:FF:000168">
    <property type="entry name" value="Isoleucine--tRNA ligase"/>
    <property type="match status" value="1"/>
</dbReference>
<dbReference type="Gene3D" id="1.10.730.20">
    <property type="match status" value="1"/>
</dbReference>
<dbReference type="Gene3D" id="3.40.50.620">
    <property type="entry name" value="HUPs"/>
    <property type="match status" value="2"/>
</dbReference>
<dbReference type="Gene3D" id="1.10.10.830">
    <property type="entry name" value="Ile-tRNA synthetase CP2 domain-like"/>
    <property type="match status" value="1"/>
</dbReference>
<dbReference type="HAMAP" id="MF_02002">
    <property type="entry name" value="Ile_tRNA_synth_type1"/>
    <property type="match status" value="1"/>
</dbReference>
<dbReference type="InterPro" id="IPR001412">
    <property type="entry name" value="aa-tRNA-synth_I_CS"/>
</dbReference>
<dbReference type="InterPro" id="IPR002300">
    <property type="entry name" value="aa-tRNA-synth_Ia"/>
</dbReference>
<dbReference type="InterPro" id="IPR033708">
    <property type="entry name" value="Anticodon_Ile_BEm"/>
</dbReference>
<dbReference type="InterPro" id="IPR002301">
    <property type="entry name" value="Ile-tRNA-ligase"/>
</dbReference>
<dbReference type="InterPro" id="IPR023585">
    <property type="entry name" value="Ile-tRNA-ligase_type1"/>
</dbReference>
<dbReference type="InterPro" id="IPR050081">
    <property type="entry name" value="Ile-tRNA_ligase"/>
</dbReference>
<dbReference type="InterPro" id="IPR013155">
    <property type="entry name" value="M/V/L/I-tRNA-synth_anticd-bd"/>
</dbReference>
<dbReference type="InterPro" id="IPR014729">
    <property type="entry name" value="Rossmann-like_a/b/a_fold"/>
</dbReference>
<dbReference type="InterPro" id="IPR009080">
    <property type="entry name" value="tRNAsynth_Ia_anticodon-bd"/>
</dbReference>
<dbReference type="InterPro" id="IPR009008">
    <property type="entry name" value="Val/Leu/Ile-tRNA-synth_edit"/>
</dbReference>
<dbReference type="NCBIfam" id="TIGR00392">
    <property type="entry name" value="ileS"/>
    <property type="match status" value="1"/>
</dbReference>
<dbReference type="PANTHER" id="PTHR42765:SF1">
    <property type="entry name" value="ISOLEUCINE--TRNA LIGASE, MITOCHONDRIAL"/>
    <property type="match status" value="1"/>
</dbReference>
<dbReference type="PANTHER" id="PTHR42765">
    <property type="entry name" value="SOLEUCYL-TRNA SYNTHETASE"/>
    <property type="match status" value="1"/>
</dbReference>
<dbReference type="Pfam" id="PF08264">
    <property type="entry name" value="Anticodon_1"/>
    <property type="match status" value="1"/>
</dbReference>
<dbReference type="Pfam" id="PF00133">
    <property type="entry name" value="tRNA-synt_1"/>
    <property type="match status" value="1"/>
</dbReference>
<dbReference type="PRINTS" id="PR00984">
    <property type="entry name" value="TRNASYNTHILE"/>
</dbReference>
<dbReference type="SUPFAM" id="SSF47323">
    <property type="entry name" value="Anticodon-binding domain of a subclass of class I aminoacyl-tRNA synthetases"/>
    <property type="match status" value="1"/>
</dbReference>
<dbReference type="SUPFAM" id="SSF52374">
    <property type="entry name" value="Nucleotidylyl transferase"/>
    <property type="match status" value="1"/>
</dbReference>
<dbReference type="SUPFAM" id="SSF50677">
    <property type="entry name" value="ValRS/IleRS/LeuRS editing domain"/>
    <property type="match status" value="1"/>
</dbReference>
<dbReference type="PROSITE" id="PS00178">
    <property type="entry name" value="AA_TRNA_LIGASE_I"/>
    <property type="match status" value="1"/>
</dbReference>
<feature type="chain" id="PRO_0000098399" description="Isoleucine--tRNA ligase">
    <location>
        <begin position="1"/>
        <end position="920"/>
    </location>
</feature>
<feature type="short sequence motif" description="'HIGH' region">
    <location>
        <begin position="58"/>
        <end position="68"/>
    </location>
</feature>
<feature type="short sequence motif" description="'KMSKS' region">
    <location>
        <begin position="610"/>
        <end position="614"/>
    </location>
</feature>
<feature type="binding site" evidence="1">
    <location>
        <position position="569"/>
    </location>
    <ligand>
        <name>L-isoleucyl-5'-AMP</name>
        <dbReference type="ChEBI" id="CHEBI:178002"/>
    </ligand>
</feature>
<feature type="binding site" evidence="1">
    <location>
        <position position="613"/>
    </location>
    <ligand>
        <name>ATP</name>
        <dbReference type="ChEBI" id="CHEBI:30616"/>
    </ligand>
</feature>
<feature type="binding site" evidence="1">
    <location>
        <position position="895"/>
    </location>
    <ligand>
        <name>Zn(2+)</name>
        <dbReference type="ChEBI" id="CHEBI:29105"/>
    </ligand>
</feature>
<feature type="binding site" evidence="1">
    <location>
        <position position="898"/>
    </location>
    <ligand>
        <name>Zn(2+)</name>
        <dbReference type="ChEBI" id="CHEBI:29105"/>
    </ligand>
</feature>
<feature type="binding site" evidence="1">
    <location>
        <position position="910"/>
    </location>
    <ligand>
        <name>Zn(2+)</name>
        <dbReference type="ChEBI" id="CHEBI:29105"/>
    </ligand>
</feature>
<feature type="binding site" evidence="1">
    <location>
        <position position="913"/>
    </location>
    <ligand>
        <name>Zn(2+)</name>
        <dbReference type="ChEBI" id="CHEBI:29105"/>
    </ligand>
</feature>
<name>SYI_HELPJ</name>
<organism>
    <name type="scientific">Helicobacter pylori (strain J99 / ATCC 700824)</name>
    <name type="common">Campylobacter pylori J99</name>
    <dbReference type="NCBI Taxonomy" id="85963"/>
    <lineage>
        <taxon>Bacteria</taxon>
        <taxon>Pseudomonadati</taxon>
        <taxon>Campylobacterota</taxon>
        <taxon>Epsilonproteobacteria</taxon>
        <taxon>Campylobacterales</taxon>
        <taxon>Helicobacteraceae</taxon>
        <taxon>Helicobacter</taxon>
    </lineage>
</organism>
<accession>Q9ZJJ1</accession>